<organism>
    <name type="scientific">Escherichia coli O157:H7</name>
    <dbReference type="NCBI Taxonomy" id="83334"/>
    <lineage>
        <taxon>Bacteria</taxon>
        <taxon>Pseudomonadati</taxon>
        <taxon>Pseudomonadota</taxon>
        <taxon>Gammaproteobacteria</taxon>
        <taxon>Enterobacterales</taxon>
        <taxon>Enterobacteriaceae</taxon>
        <taxon>Escherichia</taxon>
    </lineage>
</organism>
<evidence type="ECO:0000255" key="1">
    <source>
        <dbReference type="HAMAP-Rule" id="MF_01362"/>
    </source>
</evidence>
<protein>
    <recommendedName>
        <fullName evidence="1">UPF0387 membrane protein YohO</fullName>
    </recommendedName>
</protein>
<reference key="1">
    <citation type="journal article" date="2001" name="Nature">
        <title>Genome sequence of enterohaemorrhagic Escherichia coli O157:H7.</title>
        <authorList>
            <person name="Perna N.T."/>
            <person name="Plunkett G. III"/>
            <person name="Burland V."/>
            <person name="Mau B."/>
            <person name="Glasner J.D."/>
            <person name="Rose D.J."/>
            <person name="Mayhew G.F."/>
            <person name="Evans P.S."/>
            <person name="Gregor J."/>
            <person name="Kirkpatrick H.A."/>
            <person name="Posfai G."/>
            <person name="Hackett J."/>
            <person name="Klink S."/>
            <person name="Boutin A."/>
            <person name="Shao Y."/>
            <person name="Miller L."/>
            <person name="Grotbeck E.J."/>
            <person name="Davis N.W."/>
            <person name="Lim A."/>
            <person name="Dimalanta E.T."/>
            <person name="Potamousis K."/>
            <person name="Apodaca J."/>
            <person name="Anantharaman T.S."/>
            <person name="Lin J."/>
            <person name="Yen G."/>
            <person name="Schwartz D.C."/>
            <person name="Welch R.A."/>
            <person name="Blattner F.R."/>
        </authorList>
    </citation>
    <scope>NUCLEOTIDE SEQUENCE [LARGE SCALE GENOMIC DNA]</scope>
    <source>
        <strain>O157:H7 / EDL933 / ATCC 700927 / EHEC</strain>
    </source>
</reference>
<reference key="2">
    <citation type="journal article" date="2001" name="DNA Res.">
        <title>Complete genome sequence of enterohemorrhagic Escherichia coli O157:H7 and genomic comparison with a laboratory strain K-12.</title>
        <authorList>
            <person name="Hayashi T."/>
            <person name="Makino K."/>
            <person name="Ohnishi M."/>
            <person name="Kurokawa K."/>
            <person name="Ishii K."/>
            <person name="Yokoyama K."/>
            <person name="Han C.-G."/>
            <person name="Ohtsubo E."/>
            <person name="Nakayama K."/>
            <person name="Murata T."/>
            <person name="Tanaka M."/>
            <person name="Tobe T."/>
            <person name="Iida T."/>
            <person name="Takami H."/>
            <person name="Honda T."/>
            <person name="Sasakawa C."/>
            <person name="Ogasawara N."/>
            <person name="Yasunaga T."/>
            <person name="Kuhara S."/>
            <person name="Shiba T."/>
            <person name="Hattori M."/>
            <person name="Shinagawa H."/>
        </authorList>
    </citation>
    <scope>NUCLEOTIDE SEQUENCE [LARGE SCALE GENOMIC DNA]</scope>
    <source>
        <strain>O157:H7 / Sakai / RIMD 0509952 / EHEC</strain>
    </source>
</reference>
<name>YOHO_ECO57</name>
<accession>P0C1Y6</accession>
<comment type="subcellular location">
    <subcellularLocation>
        <location evidence="1">Cell inner membrane</location>
        <topology evidence="1">Single-pass membrane protein</topology>
    </subcellularLocation>
</comment>
<comment type="similarity">
    <text evidence="1">Belongs to the UPF0387 family.</text>
</comment>
<keyword id="KW-0997">Cell inner membrane</keyword>
<keyword id="KW-1003">Cell membrane</keyword>
<keyword id="KW-0472">Membrane</keyword>
<keyword id="KW-1185">Reference proteome</keyword>
<keyword id="KW-0812">Transmembrane</keyword>
<keyword id="KW-1133">Transmembrane helix</keyword>
<gene>
    <name evidence="1" type="primary">yohO</name>
    <name type="ordered locus">Z3376</name>
    <name type="ordered locus">ECs3014.1</name>
</gene>
<feature type="chain" id="PRO_0000252194" description="UPF0387 membrane protein YohO">
    <location>
        <begin position="1"/>
        <end position="35"/>
    </location>
</feature>
<feature type="transmembrane region" description="Helical" evidence="1">
    <location>
        <begin position="6"/>
        <end position="26"/>
    </location>
</feature>
<sequence length="35" mass="3643">MRIAKIGVIALFLFMALGGIGGVMLAGYTFILRAG</sequence>
<proteinExistence type="inferred from homology"/>
<dbReference type="EMBL" id="AE005174">
    <property type="status" value="NOT_ANNOTATED_CDS"/>
    <property type="molecule type" value="Genomic_DNA"/>
</dbReference>
<dbReference type="EMBL" id="BA000007">
    <property type="status" value="NOT_ANNOTATED_CDS"/>
    <property type="molecule type" value="Genomic_DNA"/>
</dbReference>
<dbReference type="RefSeq" id="WP_001216963.1">
    <property type="nucleotide sequence ID" value="NZ_VOAI01000001.1"/>
</dbReference>
<dbReference type="PATRIC" id="fig|83334.175.peg.4535"/>
<dbReference type="Proteomes" id="UP000000558">
    <property type="component" value="Chromosome"/>
</dbReference>
<dbReference type="Proteomes" id="UP000002519">
    <property type="component" value="Chromosome"/>
</dbReference>
<dbReference type="GO" id="GO:0005886">
    <property type="term" value="C:plasma membrane"/>
    <property type="evidence" value="ECO:0007669"/>
    <property type="project" value="UniProtKB-SubCell"/>
</dbReference>
<dbReference type="HAMAP" id="MF_01362">
    <property type="entry name" value="UPF0387"/>
    <property type="match status" value="1"/>
</dbReference>
<dbReference type="InterPro" id="IPR020870">
    <property type="entry name" value="UPF0387_membrane"/>
</dbReference>
<dbReference type="NCBIfam" id="NF010225">
    <property type="entry name" value="PRK13681.1"/>
    <property type="match status" value="1"/>
</dbReference>